<accession>A8LLX6</accession>
<sequence length="300" mass="32826">MPWPAHCRHVTGEVGIYQTLKHKPLAEVRAAIRAGQYCSHTAGLGKGFLQANLAIMPEAYALDFMRYCQRNPKPCPLSGVSDTGNPMMTTMGGQIDIRTDVPAYNIYRDGRLAGSVTDIRDLWQDDFVAFALGCSFTFEHALQQAGIALWHIDNDKTVPMYRSGIDTVPAGPFRGKMVVSMRAIPEDRVAEAVEISRRFPLAHGAPVHWGDPAGLGITDLARPDWGDPVPVPEGHVPVFWACGVTPQVALEAASMPICITHKPGHMLISDIPEDAEIPILRPQDQHTSQTQQGETHDTHA</sequence>
<keyword id="KW-0456">Lyase</keyword>
<keyword id="KW-1185">Reference proteome</keyword>
<comment type="similarity">
    <text evidence="1">Belongs to the D-glutamate cyclase family.</text>
</comment>
<dbReference type="EC" id="4.2.1.-" evidence="1"/>
<dbReference type="EMBL" id="CP000830">
    <property type="protein sequence ID" value="ABV94885.1"/>
    <property type="molecule type" value="Genomic_DNA"/>
</dbReference>
<dbReference type="RefSeq" id="WP_012179812.1">
    <property type="nucleotide sequence ID" value="NC_009952.1"/>
</dbReference>
<dbReference type="SMR" id="A8LLX6"/>
<dbReference type="STRING" id="398580.Dshi_3152"/>
<dbReference type="KEGG" id="dsh:Dshi_3152"/>
<dbReference type="eggNOG" id="COG4336">
    <property type="taxonomic scope" value="Bacteria"/>
</dbReference>
<dbReference type="HOGENOM" id="CLU_059759_0_0_5"/>
<dbReference type="OrthoDB" id="149585at2"/>
<dbReference type="Proteomes" id="UP000006833">
    <property type="component" value="Chromosome"/>
</dbReference>
<dbReference type="GO" id="GO:0016829">
    <property type="term" value="F:lyase activity"/>
    <property type="evidence" value="ECO:0007669"/>
    <property type="project" value="UniProtKB-KW"/>
</dbReference>
<dbReference type="FunFam" id="3.30.2040.10:FF:000001">
    <property type="entry name" value="D-glutamate cyclase, mitochondrial"/>
    <property type="match status" value="1"/>
</dbReference>
<dbReference type="Gene3D" id="3.40.1640.10">
    <property type="entry name" value="PSTPO5379-like"/>
    <property type="match status" value="1"/>
</dbReference>
<dbReference type="Gene3D" id="3.30.2040.10">
    <property type="entry name" value="PSTPO5379-like domain"/>
    <property type="match status" value="1"/>
</dbReference>
<dbReference type="HAMAP" id="MF_01830">
    <property type="entry name" value="Hydro_lyase"/>
    <property type="match status" value="1"/>
</dbReference>
<dbReference type="InterPro" id="IPR009906">
    <property type="entry name" value="D-Glu_cyclase"/>
</dbReference>
<dbReference type="InterPro" id="IPR038021">
    <property type="entry name" value="Putative_hydro-lyase"/>
</dbReference>
<dbReference type="InterPro" id="IPR016938">
    <property type="entry name" value="UPF0317"/>
</dbReference>
<dbReference type="NCBIfam" id="NF003969">
    <property type="entry name" value="PRK05463.1"/>
    <property type="match status" value="1"/>
</dbReference>
<dbReference type="PANTHER" id="PTHR32022">
    <property type="entry name" value="D-GLUTAMATE CYCLASE, MITOCHONDRIAL"/>
    <property type="match status" value="1"/>
</dbReference>
<dbReference type="PANTHER" id="PTHR32022:SF10">
    <property type="entry name" value="D-GLUTAMATE CYCLASE, MITOCHONDRIAL"/>
    <property type="match status" value="1"/>
</dbReference>
<dbReference type="Pfam" id="PF07286">
    <property type="entry name" value="D-Glu_cyclase"/>
    <property type="match status" value="1"/>
</dbReference>
<dbReference type="PIRSF" id="PIRSF029755">
    <property type="entry name" value="UCP029755"/>
    <property type="match status" value="1"/>
</dbReference>
<dbReference type="SUPFAM" id="SSF160920">
    <property type="entry name" value="PSTPO5379-like"/>
    <property type="match status" value="1"/>
</dbReference>
<protein>
    <recommendedName>
        <fullName evidence="1">Putative hydro-lyase Dshi_3152</fullName>
        <ecNumber evidence="1">4.2.1.-</ecNumber>
    </recommendedName>
</protein>
<proteinExistence type="inferred from homology"/>
<name>Y3152_DINSH</name>
<feature type="chain" id="PRO_0000379837" description="Putative hydro-lyase Dshi_3152">
    <location>
        <begin position="1"/>
        <end position="300"/>
    </location>
</feature>
<reference key="1">
    <citation type="journal article" date="2010" name="ISME J.">
        <title>The complete genome sequence of the algal symbiont Dinoroseobacter shibae: a hitchhiker's guide to life in the sea.</title>
        <authorList>
            <person name="Wagner-Dobler I."/>
            <person name="Ballhausen B."/>
            <person name="Berger M."/>
            <person name="Brinkhoff T."/>
            <person name="Buchholz I."/>
            <person name="Bunk B."/>
            <person name="Cypionka H."/>
            <person name="Daniel R."/>
            <person name="Drepper T."/>
            <person name="Gerdts G."/>
            <person name="Hahnke S."/>
            <person name="Han C."/>
            <person name="Jahn D."/>
            <person name="Kalhoefer D."/>
            <person name="Kiss H."/>
            <person name="Klenk H.P."/>
            <person name="Kyrpides N."/>
            <person name="Liebl W."/>
            <person name="Liesegang H."/>
            <person name="Meincke L."/>
            <person name="Pati A."/>
            <person name="Petersen J."/>
            <person name="Piekarski T."/>
            <person name="Pommerenke C."/>
            <person name="Pradella S."/>
            <person name="Pukall R."/>
            <person name="Rabus R."/>
            <person name="Stackebrandt E."/>
            <person name="Thole S."/>
            <person name="Thompson L."/>
            <person name="Tielen P."/>
            <person name="Tomasch J."/>
            <person name="von Jan M."/>
            <person name="Wanphrut N."/>
            <person name="Wichels A."/>
            <person name="Zech H."/>
            <person name="Simon M."/>
        </authorList>
    </citation>
    <scope>NUCLEOTIDE SEQUENCE [LARGE SCALE GENOMIC DNA]</scope>
    <source>
        <strain>DSM 16493 / NCIMB 14021 / DFL 12</strain>
    </source>
</reference>
<organism>
    <name type="scientific">Dinoroseobacter shibae (strain DSM 16493 / NCIMB 14021 / DFL 12)</name>
    <dbReference type="NCBI Taxonomy" id="398580"/>
    <lineage>
        <taxon>Bacteria</taxon>
        <taxon>Pseudomonadati</taxon>
        <taxon>Pseudomonadota</taxon>
        <taxon>Alphaproteobacteria</taxon>
        <taxon>Rhodobacterales</taxon>
        <taxon>Roseobacteraceae</taxon>
        <taxon>Dinoroseobacter</taxon>
    </lineage>
</organism>
<evidence type="ECO:0000255" key="1">
    <source>
        <dbReference type="HAMAP-Rule" id="MF_01830"/>
    </source>
</evidence>
<gene>
    <name type="ordered locus">Dshi_3152</name>
</gene>